<proteinExistence type="inferred from homology"/>
<protein>
    <recommendedName>
        <fullName>Probable lysosomal cobalamin transporter</fullName>
    </recommendedName>
</protein>
<accession>A1C3U0</accession>
<dbReference type="EMBL" id="DS026990">
    <property type="protein sequence ID" value="EAW15080.1"/>
    <property type="molecule type" value="Genomic_DNA"/>
</dbReference>
<dbReference type="RefSeq" id="XP_001276506.1">
    <property type="nucleotide sequence ID" value="XM_001276505.1"/>
</dbReference>
<dbReference type="SMR" id="A1C3U0"/>
<dbReference type="STRING" id="344612.A1C3U0"/>
<dbReference type="EnsemblFungi" id="EAW15080">
    <property type="protein sequence ID" value="EAW15080"/>
    <property type="gene ID" value="ACLA_057360"/>
</dbReference>
<dbReference type="GeneID" id="4708923"/>
<dbReference type="KEGG" id="act:ACLA_057360"/>
<dbReference type="VEuPathDB" id="FungiDB:ACLA_057360"/>
<dbReference type="eggNOG" id="ENOG502QQ2T">
    <property type="taxonomic scope" value="Eukaryota"/>
</dbReference>
<dbReference type="HOGENOM" id="CLU_028341_1_0_1"/>
<dbReference type="OMA" id="FWAQFVF"/>
<dbReference type="OrthoDB" id="73273at2759"/>
<dbReference type="Proteomes" id="UP000006701">
    <property type="component" value="Unassembled WGS sequence"/>
</dbReference>
<dbReference type="GO" id="GO:0005774">
    <property type="term" value="C:vacuolar membrane"/>
    <property type="evidence" value="ECO:0007669"/>
    <property type="project" value="TreeGrafter"/>
</dbReference>
<dbReference type="GO" id="GO:0031419">
    <property type="term" value="F:cobalamin binding"/>
    <property type="evidence" value="ECO:0007669"/>
    <property type="project" value="UniProtKB-KW"/>
</dbReference>
<dbReference type="GO" id="GO:0072665">
    <property type="term" value="P:protein localization to vacuole"/>
    <property type="evidence" value="ECO:0007669"/>
    <property type="project" value="TreeGrafter"/>
</dbReference>
<dbReference type="InterPro" id="IPR050854">
    <property type="entry name" value="LMBD1_LysCbl_Transport"/>
</dbReference>
<dbReference type="InterPro" id="IPR006876">
    <property type="entry name" value="LMBR1-like_membr_prot"/>
</dbReference>
<dbReference type="PANTHER" id="PTHR16130:SF2">
    <property type="entry name" value="LYSOSOMAL COBALAMIN TRANSPORT ESCORT PROTEIN LMBD1"/>
    <property type="match status" value="1"/>
</dbReference>
<dbReference type="PANTHER" id="PTHR16130">
    <property type="entry name" value="LYSOSOMAL COBALAMIN TRANSPORTER-RELATED"/>
    <property type="match status" value="1"/>
</dbReference>
<dbReference type="Pfam" id="PF04791">
    <property type="entry name" value="LMBR1"/>
    <property type="match status" value="1"/>
</dbReference>
<sequence length="564" mass="63083">MESLQIYLIWSVYGVAIAILIAVASTFICAYQTPRDRSPSVTLICIISITVLLATVLLLPVDIALVSSITSSALGRRKSWATQAEVDKITFSLTIVYYSLYTVDALLCLIGIPFTYFWYEEYDEVAAEAGQQTAGQRFWAAFKYTLFFVAILIVLFLVGFFIPTSRNLAGHDSDFLRRLFTEDRGQHALTFSVGILTTLGLSLYIIYTSSGLARLPVLLMKTAPSFSSPSLIASTAMQLDSNRERQRQLDGRCGGDTALLSSKDRRELDSLVREERTLTRRQRLAEGAQEERRSWPIKVYHKMEAVLHPFKLLAGFVLLLAALFLWTSLCVTAIDKLMNSPCKHRCGYILERVNIFNPVNWVLIQSSRVFPVDYVIFTLIVLFLFCSSVVGIAAFGIRFLWIQIFSIRKGRTSPQALLLLTSMLMLITLALNYSVAVILAPQYATFGPQTFCDMPPVSSGPQPDCSRARNLIKSCSEKAENIGANGLCTPSVASTLLNQMTSNFPFFGAVFFWAQFIFLGLYLLVLVVSVTRSPRLDEHQLDEDAEEAEEERLLARTGRRINTA</sequence>
<gene>
    <name type="ORF">ACLA_057360</name>
</gene>
<name>LMBD1_ASPCL</name>
<comment type="function">
    <text evidence="1">Probable lysosomal cobalamin transporter. Required to export cobalamin from lysosomes allowing its conversion to cofactors (By similarity).</text>
</comment>
<comment type="subcellular location">
    <subcellularLocation>
        <location evidence="1">Lysosome membrane</location>
        <topology evidence="1">Multi-pass membrane protein</topology>
    </subcellularLocation>
</comment>
<comment type="similarity">
    <text evidence="3">Belongs to the LIMR family. LMBRD1 subfamily.</text>
</comment>
<reference key="1">
    <citation type="journal article" date="2008" name="PLoS Genet.">
        <title>Genomic islands in the pathogenic filamentous fungus Aspergillus fumigatus.</title>
        <authorList>
            <person name="Fedorova N.D."/>
            <person name="Khaldi N."/>
            <person name="Joardar V.S."/>
            <person name="Maiti R."/>
            <person name="Amedeo P."/>
            <person name="Anderson M.J."/>
            <person name="Crabtree J."/>
            <person name="Silva J.C."/>
            <person name="Badger J.H."/>
            <person name="Albarraq A."/>
            <person name="Angiuoli S."/>
            <person name="Bussey H."/>
            <person name="Bowyer P."/>
            <person name="Cotty P.J."/>
            <person name="Dyer P.S."/>
            <person name="Egan A."/>
            <person name="Galens K."/>
            <person name="Fraser-Liggett C.M."/>
            <person name="Haas B.J."/>
            <person name="Inman J.M."/>
            <person name="Kent R."/>
            <person name="Lemieux S."/>
            <person name="Malavazi I."/>
            <person name="Orvis J."/>
            <person name="Roemer T."/>
            <person name="Ronning C.M."/>
            <person name="Sundaram J.P."/>
            <person name="Sutton G."/>
            <person name="Turner G."/>
            <person name="Venter J.C."/>
            <person name="White O.R."/>
            <person name="Whitty B.R."/>
            <person name="Youngman P."/>
            <person name="Wolfe K.H."/>
            <person name="Goldman G.H."/>
            <person name="Wortman J.R."/>
            <person name="Jiang B."/>
            <person name="Denning D.W."/>
            <person name="Nierman W.C."/>
        </authorList>
    </citation>
    <scope>NUCLEOTIDE SEQUENCE [LARGE SCALE GENOMIC DNA]</scope>
    <source>
        <strain>ATCC 1007 / CBS 513.65 / DSM 816 / NCTC 3887 / NRRL 1 / QM 1276 / 107</strain>
    </source>
</reference>
<evidence type="ECO:0000250" key="1"/>
<evidence type="ECO:0000255" key="2"/>
<evidence type="ECO:0000305" key="3"/>
<feature type="chain" id="PRO_0000365822" description="Probable lysosomal cobalamin transporter">
    <location>
        <begin position="1"/>
        <end position="564"/>
    </location>
</feature>
<feature type="transmembrane region" description="Helical" evidence="2">
    <location>
        <begin position="8"/>
        <end position="28"/>
    </location>
</feature>
<feature type="transmembrane region" description="Helical" evidence="2">
    <location>
        <begin position="41"/>
        <end position="61"/>
    </location>
</feature>
<feature type="transmembrane region" description="Helical" evidence="2">
    <location>
        <begin position="94"/>
        <end position="114"/>
    </location>
</feature>
<feature type="transmembrane region" description="Helical" evidence="2">
    <location>
        <begin position="144"/>
        <end position="164"/>
    </location>
</feature>
<feature type="transmembrane region" description="Helical" evidence="2">
    <location>
        <begin position="188"/>
        <end position="208"/>
    </location>
</feature>
<feature type="transmembrane region" description="Helical" evidence="2">
    <location>
        <begin position="312"/>
        <end position="332"/>
    </location>
</feature>
<feature type="transmembrane region" description="Helical" evidence="2">
    <location>
        <begin position="375"/>
        <end position="395"/>
    </location>
</feature>
<feature type="transmembrane region" description="Helical" evidence="2">
    <location>
        <begin position="418"/>
        <end position="438"/>
    </location>
</feature>
<feature type="transmembrane region" description="Helical" evidence="2">
    <location>
        <begin position="506"/>
        <end position="526"/>
    </location>
</feature>
<keyword id="KW-0846">Cobalamin</keyword>
<keyword id="KW-0170">Cobalt</keyword>
<keyword id="KW-0458">Lysosome</keyword>
<keyword id="KW-0472">Membrane</keyword>
<keyword id="KW-1185">Reference proteome</keyword>
<keyword id="KW-0812">Transmembrane</keyword>
<keyword id="KW-1133">Transmembrane helix</keyword>
<keyword id="KW-0813">Transport</keyword>
<organism>
    <name type="scientific">Aspergillus clavatus (strain ATCC 1007 / CBS 513.65 / DSM 816 / NCTC 3887 / NRRL 1 / QM 1276 / 107)</name>
    <dbReference type="NCBI Taxonomy" id="344612"/>
    <lineage>
        <taxon>Eukaryota</taxon>
        <taxon>Fungi</taxon>
        <taxon>Dikarya</taxon>
        <taxon>Ascomycota</taxon>
        <taxon>Pezizomycotina</taxon>
        <taxon>Eurotiomycetes</taxon>
        <taxon>Eurotiomycetidae</taxon>
        <taxon>Eurotiales</taxon>
        <taxon>Aspergillaceae</taxon>
        <taxon>Aspergillus</taxon>
        <taxon>Aspergillus subgen. Fumigati</taxon>
    </lineage>
</organism>